<dbReference type="EMBL" id="X92868">
    <property type="protein sequence ID" value="CAA63454.1"/>
    <property type="molecule type" value="Genomic_DNA"/>
</dbReference>
<dbReference type="EMBL" id="U93875">
    <property type="protein sequence ID" value="AAB80881.1"/>
    <property type="molecule type" value="Genomic_DNA"/>
</dbReference>
<dbReference type="EMBL" id="AL009126">
    <property type="protein sequence ID" value="CAB14631.1"/>
    <property type="molecule type" value="Genomic_DNA"/>
</dbReference>
<dbReference type="PIR" id="D69971">
    <property type="entry name" value="D69971"/>
</dbReference>
<dbReference type="RefSeq" id="NP_390567.1">
    <property type="nucleotide sequence ID" value="NC_000964.3"/>
</dbReference>
<dbReference type="RefSeq" id="WP_003229850.1">
    <property type="nucleotide sequence ID" value="NZ_OZ025638.1"/>
</dbReference>
<dbReference type="SMR" id="O07917"/>
<dbReference type="FunCoup" id="O07917">
    <property type="interactions" value="64"/>
</dbReference>
<dbReference type="STRING" id="224308.BSU26900"/>
<dbReference type="PaxDb" id="224308-BSU26900"/>
<dbReference type="EnsemblBacteria" id="CAB14631">
    <property type="protein sequence ID" value="CAB14631"/>
    <property type="gene ID" value="BSU_26900"/>
</dbReference>
<dbReference type="GeneID" id="937608"/>
<dbReference type="KEGG" id="bsu:BSU26900"/>
<dbReference type="PATRIC" id="fig|224308.179.peg.2922"/>
<dbReference type="eggNOG" id="COG5566">
    <property type="taxonomic scope" value="Bacteria"/>
</dbReference>
<dbReference type="InParanoid" id="O07917"/>
<dbReference type="OrthoDB" id="9800398at2"/>
<dbReference type="PhylomeDB" id="O07917"/>
<dbReference type="BioCyc" id="BSUB:BSU26900-MONOMER"/>
<dbReference type="Proteomes" id="UP000001570">
    <property type="component" value="Chromosome"/>
</dbReference>
<dbReference type="Gene3D" id="1.10.10.60">
    <property type="entry name" value="Homeodomain-like"/>
    <property type="match status" value="1"/>
</dbReference>
<dbReference type="InterPro" id="IPR052411">
    <property type="entry name" value="c-mor_Regulatory_Protein"/>
</dbReference>
<dbReference type="InterPro" id="IPR009057">
    <property type="entry name" value="Homeodomain-like_sf"/>
</dbReference>
<dbReference type="InterPro" id="IPR049739">
    <property type="entry name" value="YraL-like"/>
</dbReference>
<dbReference type="NCBIfam" id="NF040785">
    <property type="entry name" value="CD3324_fam"/>
    <property type="match status" value="1"/>
</dbReference>
<dbReference type="PANTHER" id="PTHR37812">
    <property type="entry name" value="MU-LIKE PROPHAGE FLUMU PROTEIN C"/>
    <property type="match status" value="1"/>
</dbReference>
<dbReference type="PANTHER" id="PTHR37812:SF1">
    <property type="entry name" value="MU-LIKE PROPHAGE FLUMU PROTEIN C"/>
    <property type="match status" value="1"/>
</dbReference>
<dbReference type="SUPFAM" id="SSF46689">
    <property type="entry name" value="Homeodomain-like"/>
    <property type="match status" value="1"/>
</dbReference>
<name>YRAL_BACSU</name>
<organism>
    <name type="scientific">Bacillus subtilis (strain 168)</name>
    <dbReference type="NCBI Taxonomy" id="224308"/>
    <lineage>
        <taxon>Bacteria</taxon>
        <taxon>Bacillati</taxon>
        <taxon>Bacillota</taxon>
        <taxon>Bacilli</taxon>
        <taxon>Bacillales</taxon>
        <taxon>Bacillaceae</taxon>
        <taxon>Bacillus</taxon>
    </lineage>
</organism>
<proteinExistence type="predicted"/>
<sequence length="87" mass="9908">MAYVKATAILPEKLISEIQKYVQGKTIYIPKPESSHQKWGACSGTRKLIDDRNASIKKAFKNGKTIHQLSDEYHLSIETIKKIVYSK</sequence>
<keyword id="KW-1185">Reference proteome</keyword>
<feature type="chain" id="PRO_0000360744" description="Uncharacterized protein YraL">
    <location>
        <begin position="1"/>
        <end position="87"/>
    </location>
</feature>
<protein>
    <recommendedName>
        <fullName>Uncharacterized protein YraL</fullName>
    </recommendedName>
</protein>
<accession>O07917</accession>
<accession>Q795Z9</accession>
<reference key="1">
    <citation type="journal article" date="1997" name="Microbiology">
        <title>A 23911 bp region of the Bacillus subtilis genome comprising genes located upstream and downstream of the lev operon.</title>
        <authorList>
            <person name="Parro V."/>
            <person name="San Roman M."/>
            <person name="Galindo I."/>
            <person name="Purnelle B."/>
            <person name="Bolotin A."/>
            <person name="Sorokin A."/>
            <person name="Mellado R.P."/>
        </authorList>
    </citation>
    <scope>NUCLEOTIDE SEQUENCE [GENOMIC DNA]</scope>
    <source>
        <strain>168</strain>
    </source>
</reference>
<reference key="2">
    <citation type="journal article" date="1997" name="Microbiology">
        <title>Sequence of the Bacillus subtilis genome region in the vicinity of the lev operon reveals two new extracytoplasmic function RNA polymerase sigma factors SigV and SigZ.</title>
        <authorList>
            <person name="Sorokin A."/>
            <person name="Bolotin A."/>
            <person name="Purnelle B."/>
            <person name="Hilbert H."/>
            <person name="Lauber J."/>
            <person name="Duesterhoeft A."/>
            <person name="Ehrlich S.D."/>
        </authorList>
    </citation>
    <scope>NUCLEOTIDE SEQUENCE [GENOMIC DNA]</scope>
    <source>
        <strain>168</strain>
    </source>
</reference>
<reference key="3">
    <citation type="journal article" date="1997" name="Nature">
        <title>The complete genome sequence of the Gram-positive bacterium Bacillus subtilis.</title>
        <authorList>
            <person name="Kunst F."/>
            <person name="Ogasawara N."/>
            <person name="Moszer I."/>
            <person name="Albertini A.M."/>
            <person name="Alloni G."/>
            <person name="Azevedo V."/>
            <person name="Bertero M.G."/>
            <person name="Bessieres P."/>
            <person name="Bolotin A."/>
            <person name="Borchert S."/>
            <person name="Borriss R."/>
            <person name="Boursier L."/>
            <person name="Brans A."/>
            <person name="Braun M."/>
            <person name="Brignell S.C."/>
            <person name="Bron S."/>
            <person name="Brouillet S."/>
            <person name="Bruschi C.V."/>
            <person name="Caldwell B."/>
            <person name="Capuano V."/>
            <person name="Carter N.M."/>
            <person name="Choi S.-K."/>
            <person name="Codani J.-J."/>
            <person name="Connerton I.F."/>
            <person name="Cummings N.J."/>
            <person name="Daniel R.A."/>
            <person name="Denizot F."/>
            <person name="Devine K.M."/>
            <person name="Duesterhoeft A."/>
            <person name="Ehrlich S.D."/>
            <person name="Emmerson P.T."/>
            <person name="Entian K.-D."/>
            <person name="Errington J."/>
            <person name="Fabret C."/>
            <person name="Ferrari E."/>
            <person name="Foulger D."/>
            <person name="Fritz C."/>
            <person name="Fujita M."/>
            <person name="Fujita Y."/>
            <person name="Fuma S."/>
            <person name="Galizzi A."/>
            <person name="Galleron N."/>
            <person name="Ghim S.-Y."/>
            <person name="Glaser P."/>
            <person name="Goffeau A."/>
            <person name="Golightly E.J."/>
            <person name="Grandi G."/>
            <person name="Guiseppi G."/>
            <person name="Guy B.J."/>
            <person name="Haga K."/>
            <person name="Haiech J."/>
            <person name="Harwood C.R."/>
            <person name="Henaut A."/>
            <person name="Hilbert H."/>
            <person name="Holsappel S."/>
            <person name="Hosono S."/>
            <person name="Hullo M.-F."/>
            <person name="Itaya M."/>
            <person name="Jones L.-M."/>
            <person name="Joris B."/>
            <person name="Karamata D."/>
            <person name="Kasahara Y."/>
            <person name="Klaerr-Blanchard M."/>
            <person name="Klein C."/>
            <person name="Kobayashi Y."/>
            <person name="Koetter P."/>
            <person name="Koningstein G."/>
            <person name="Krogh S."/>
            <person name="Kumano M."/>
            <person name="Kurita K."/>
            <person name="Lapidus A."/>
            <person name="Lardinois S."/>
            <person name="Lauber J."/>
            <person name="Lazarevic V."/>
            <person name="Lee S.-M."/>
            <person name="Levine A."/>
            <person name="Liu H."/>
            <person name="Masuda S."/>
            <person name="Mauel C."/>
            <person name="Medigue C."/>
            <person name="Medina N."/>
            <person name="Mellado R.P."/>
            <person name="Mizuno M."/>
            <person name="Moestl D."/>
            <person name="Nakai S."/>
            <person name="Noback M."/>
            <person name="Noone D."/>
            <person name="O'Reilly M."/>
            <person name="Ogawa K."/>
            <person name="Ogiwara A."/>
            <person name="Oudega B."/>
            <person name="Park S.-H."/>
            <person name="Parro V."/>
            <person name="Pohl T.M."/>
            <person name="Portetelle D."/>
            <person name="Porwollik S."/>
            <person name="Prescott A.M."/>
            <person name="Presecan E."/>
            <person name="Pujic P."/>
            <person name="Purnelle B."/>
            <person name="Rapoport G."/>
            <person name="Rey M."/>
            <person name="Reynolds S."/>
            <person name="Rieger M."/>
            <person name="Rivolta C."/>
            <person name="Rocha E."/>
            <person name="Roche B."/>
            <person name="Rose M."/>
            <person name="Sadaie Y."/>
            <person name="Sato T."/>
            <person name="Scanlan E."/>
            <person name="Schleich S."/>
            <person name="Schroeter R."/>
            <person name="Scoffone F."/>
            <person name="Sekiguchi J."/>
            <person name="Sekowska A."/>
            <person name="Seror S.J."/>
            <person name="Serror P."/>
            <person name="Shin B.-S."/>
            <person name="Soldo B."/>
            <person name="Sorokin A."/>
            <person name="Tacconi E."/>
            <person name="Takagi T."/>
            <person name="Takahashi H."/>
            <person name="Takemaru K."/>
            <person name="Takeuchi M."/>
            <person name="Tamakoshi A."/>
            <person name="Tanaka T."/>
            <person name="Terpstra P."/>
            <person name="Tognoni A."/>
            <person name="Tosato V."/>
            <person name="Uchiyama S."/>
            <person name="Vandenbol M."/>
            <person name="Vannier F."/>
            <person name="Vassarotti A."/>
            <person name="Viari A."/>
            <person name="Wambutt R."/>
            <person name="Wedler E."/>
            <person name="Wedler H."/>
            <person name="Weitzenegger T."/>
            <person name="Winters P."/>
            <person name="Wipat A."/>
            <person name="Yamamoto H."/>
            <person name="Yamane K."/>
            <person name="Yasumoto K."/>
            <person name="Yata K."/>
            <person name="Yoshida K."/>
            <person name="Yoshikawa H.-F."/>
            <person name="Zumstein E."/>
            <person name="Yoshikawa H."/>
            <person name="Danchin A."/>
        </authorList>
    </citation>
    <scope>NUCLEOTIDE SEQUENCE [LARGE SCALE GENOMIC DNA]</scope>
    <source>
        <strain>168</strain>
    </source>
</reference>
<gene>
    <name type="primary">yraL</name>
    <name type="ordered locus">BSU26900</name>
</gene>